<sequence>MKAKTLIDAYEAFCPLDLSMEGDVKGLQMGSLDKDIRKVMITLDIRESTVAEAIKNEVDLIITKHAPIFKPLKDLVSSPQRDILLDLVKHDISVYVSHTNIDIVPGGLNDWFCDLLEIKEATYLSETKEGFGIGRIGTVKEQALEELASKVKRVFDLDTVRLIRYDKENPLISKIAICGGSGGEFYQDAVQKGADVYITGDIYYHTAQEMLTEGLFAVDPGHHIEVLFTEKLKEKLQGWKEENGWDVSIISSKASTNPFSHL</sequence>
<comment type="subunit">
    <text evidence="1">Homohexamer.</text>
</comment>
<comment type="similarity">
    <text evidence="2">Belongs to the GTP cyclohydrolase I type 2/NIF3 family.</text>
</comment>
<reference key="1">
    <citation type="journal article" date="2002" name="Proc. Natl. Acad. Sci. U.S.A.">
        <title>Genome sequence of a serotype M3 strain of group A Streptococcus: phage-encoded toxins, the high-virulence phenotype, and clone emergence.</title>
        <authorList>
            <person name="Beres S.B."/>
            <person name="Sylva G.L."/>
            <person name="Barbian K.D."/>
            <person name="Lei B."/>
            <person name="Hoff J.S."/>
            <person name="Mammarella N.D."/>
            <person name="Liu M.-Y."/>
            <person name="Smoot J.C."/>
            <person name="Porcella S.F."/>
            <person name="Parkins L.D."/>
            <person name="Campbell D.S."/>
            <person name="Smith T.M."/>
            <person name="McCormick J.K."/>
            <person name="Leung D.Y.M."/>
            <person name="Schlievert P.M."/>
            <person name="Musser J.M."/>
        </authorList>
    </citation>
    <scope>NUCLEOTIDE SEQUENCE [LARGE SCALE GENOMIC DNA]</scope>
    <source>
        <strain>ATCC BAA-595 / MGAS315</strain>
    </source>
</reference>
<evidence type="ECO:0000250" key="1">
    <source>
        <dbReference type="UniProtKB" id="P0AFP6"/>
    </source>
</evidence>
<evidence type="ECO:0000305" key="2"/>
<feature type="chain" id="PRO_0000147338" description="GTP cyclohydrolase 1 type 2 homolog">
    <location>
        <begin position="1"/>
        <end position="262"/>
    </location>
</feature>
<feature type="binding site" evidence="1">
    <location>
        <position position="65"/>
    </location>
    <ligand>
        <name>a divalent metal cation</name>
        <dbReference type="ChEBI" id="CHEBI:60240"/>
        <label>2</label>
    </ligand>
</feature>
<feature type="binding site" evidence="1">
    <location>
        <position position="102"/>
    </location>
    <ligand>
        <name>a divalent metal cation</name>
        <dbReference type="ChEBI" id="CHEBI:60240"/>
        <label>1</label>
    </ligand>
</feature>
<feature type="binding site" evidence="1">
    <location>
        <position position="222"/>
    </location>
    <ligand>
        <name>a divalent metal cation</name>
        <dbReference type="ChEBI" id="CHEBI:60240"/>
        <label>2</label>
    </ligand>
</feature>
<feature type="binding site" evidence="1">
    <location>
        <position position="225"/>
    </location>
    <ligand>
        <name>a divalent metal cation</name>
        <dbReference type="ChEBI" id="CHEBI:60240"/>
        <label>1</label>
    </ligand>
</feature>
<feature type="binding site" evidence="1">
    <location>
        <position position="225"/>
    </location>
    <ligand>
        <name>a divalent metal cation</name>
        <dbReference type="ChEBI" id="CHEBI:60240"/>
        <label>2</label>
    </ligand>
</feature>
<proteinExistence type="inferred from homology"/>
<keyword id="KW-0479">Metal-binding</keyword>
<organism>
    <name type="scientific">Streptococcus pyogenes serotype M3 (strain ATCC BAA-595 / MGAS315)</name>
    <dbReference type="NCBI Taxonomy" id="198466"/>
    <lineage>
        <taxon>Bacteria</taxon>
        <taxon>Bacillati</taxon>
        <taxon>Bacillota</taxon>
        <taxon>Bacilli</taxon>
        <taxon>Lactobacillales</taxon>
        <taxon>Streptococcaceae</taxon>
        <taxon>Streptococcus</taxon>
    </lineage>
</organism>
<dbReference type="EMBL" id="AE014074">
    <property type="protein sequence ID" value="AAM79251.1"/>
    <property type="molecule type" value="Genomic_DNA"/>
</dbReference>
<dbReference type="RefSeq" id="WP_002984887.1">
    <property type="nucleotide sequence ID" value="NC_004070.1"/>
</dbReference>
<dbReference type="SMR" id="P0DG84"/>
<dbReference type="KEGG" id="spg:SpyM3_0644"/>
<dbReference type="HOGENOM" id="CLU_037423_2_0_9"/>
<dbReference type="Proteomes" id="UP000000564">
    <property type="component" value="Chromosome"/>
</dbReference>
<dbReference type="GO" id="GO:0005737">
    <property type="term" value="C:cytoplasm"/>
    <property type="evidence" value="ECO:0007669"/>
    <property type="project" value="TreeGrafter"/>
</dbReference>
<dbReference type="GO" id="GO:0046872">
    <property type="term" value="F:metal ion binding"/>
    <property type="evidence" value="ECO:0007669"/>
    <property type="project" value="UniProtKB-KW"/>
</dbReference>
<dbReference type="FunFam" id="3.40.1390.30:FF:000006">
    <property type="entry name" value="Dinuclear metal center protein, YbgI family"/>
    <property type="match status" value="1"/>
</dbReference>
<dbReference type="Gene3D" id="3.40.1390.30">
    <property type="entry name" value="NIF3 (NGG1p interacting factor 3)-like"/>
    <property type="match status" value="2"/>
</dbReference>
<dbReference type="InterPro" id="IPR002678">
    <property type="entry name" value="DUF34/NIF3"/>
</dbReference>
<dbReference type="InterPro" id="IPR036069">
    <property type="entry name" value="DUF34/NIF3_sf"/>
</dbReference>
<dbReference type="NCBIfam" id="TIGR00486">
    <property type="entry name" value="YbgI_SA1388"/>
    <property type="match status" value="1"/>
</dbReference>
<dbReference type="PANTHER" id="PTHR13799:SF14">
    <property type="entry name" value="GTP CYCLOHYDROLASE 1 TYPE 2 HOMOLOG"/>
    <property type="match status" value="1"/>
</dbReference>
<dbReference type="PANTHER" id="PTHR13799">
    <property type="entry name" value="NGG1 INTERACTING FACTOR 3"/>
    <property type="match status" value="1"/>
</dbReference>
<dbReference type="Pfam" id="PF01784">
    <property type="entry name" value="DUF34_NIF3"/>
    <property type="match status" value="1"/>
</dbReference>
<dbReference type="SUPFAM" id="SSF102705">
    <property type="entry name" value="NIF3 (NGG1p interacting factor 3)-like"/>
    <property type="match status" value="1"/>
</dbReference>
<accession>P0DG84</accession>
<accession>P67275</accession>
<accession>Q9A049</accession>
<gene>
    <name type="ordered locus">SpyM3_0644</name>
</gene>
<protein>
    <recommendedName>
        <fullName>GTP cyclohydrolase 1 type 2 homolog</fullName>
    </recommendedName>
</protein>
<name>GCH1L_STRP3</name>